<sequence>MEKFTVYKGLVAPLNRENVDTDAIIPKQFLKSIKKTGFGQNLFDEWRYLDHGEPGQDCSTRPINPDFVLNQPRYKGAGILLARKNFGCGSSREHAPWALDQFGFRAVIAPSFADIFYSNCFKNGVLPIVLTEVQVDHLFNETQAFNGYQLTIDLEAQQVIAPDGTAYNFDVAPFRKYCLLNGLDDIGLTLQHADKIKAYEAERILKMSWLATQLP</sequence>
<keyword id="KW-0028">Amino-acid biosynthesis</keyword>
<keyword id="KW-0100">Branched-chain amino acid biosynthesis</keyword>
<keyword id="KW-0432">Leucine biosynthesis</keyword>
<keyword id="KW-0456">Lyase</keyword>
<comment type="function">
    <text evidence="1">Catalyzes the isomerization between 2-isopropylmalate and 3-isopropylmalate, via the formation of 2-isopropylmaleate.</text>
</comment>
<comment type="catalytic activity">
    <reaction evidence="1">
        <text>(2R,3S)-3-isopropylmalate = (2S)-2-isopropylmalate</text>
        <dbReference type="Rhea" id="RHEA:32287"/>
        <dbReference type="ChEBI" id="CHEBI:1178"/>
        <dbReference type="ChEBI" id="CHEBI:35121"/>
        <dbReference type="EC" id="4.2.1.33"/>
    </reaction>
</comment>
<comment type="pathway">
    <text evidence="1">Amino-acid biosynthesis; L-leucine biosynthesis; L-leucine from 3-methyl-2-oxobutanoate: step 2/4.</text>
</comment>
<comment type="subunit">
    <text evidence="1">Heterodimer of LeuC and LeuD.</text>
</comment>
<comment type="similarity">
    <text evidence="1">Belongs to the LeuD family. LeuD type 1 subfamily.</text>
</comment>
<reference key="1">
    <citation type="journal article" date="2013" name="Proc. Natl. Acad. Sci. U.S.A.">
        <title>Polynucleobacter necessarius, a model for genome reduction in both free-living and symbiotic bacteria.</title>
        <authorList>
            <person name="Boscaro V."/>
            <person name="Felletti M."/>
            <person name="Vannini C."/>
            <person name="Ackerman M.S."/>
            <person name="Chain P.S."/>
            <person name="Malfatti S."/>
            <person name="Vergez L.M."/>
            <person name="Shin M."/>
            <person name="Doak T.G."/>
            <person name="Lynch M."/>
            <person name="Petroni G."/>
        </authorList>
    </citation>
    <scope>NUCLEOTIDE SEQUENCE [LARGE SCALE GENOMIC DNA]</scope>
    <source>
        <strain>STIR1</strain>
    </source>
</reference>
<gene>
    <name evidence="1" type="primary">leuD</name>
    <name type="ordered locus">Pnec_1055</name>
</gene>
<proteinExistence type="inferred from homology"/>
<protein>
    <recommendedName>
        <fullName evidence="1">3-isopropylmalate dehydratase small subunit</fullName>
        <ecNumber evidence="1">4.2.1.33</ecNumber>
    </recommendedName>
    <alternativeName>
        <fullName evidence="1">Alpha-IPM isomerase</fullName>
        <shortName evidence="1">IPMI</shortName>
    </alternativeName>
    <alternativeName>
        <fullName evidence="1">Isopropylmalate isomerase</fullName>
    </alternativeName>
</protein>
<dbReference type="EC" id="4.2.1.33" evidence="1"/>
<dbReference type="EMBL" id="CP001010">
    <property type="protein sequence ID" value="ACB44230.1"/>
    <property type="molecule type" value="Genomic_DNA"/>
</dbReference>
<dbReference type="SMR" id="B1XV53"/>
<dbReference type="STRING" id="452638.Pnec_1055"/>
<dbReference type="KEGG" id="pne:Pnec_1055"/>
<dbReference type="eggNOG" id="COG0066">
    <property type="taxonomic scope" value="Bacteria"/>
</dbReference>
<dbReference type="HOGENOM" id="CLU_081378_0_3_4"/>
<dbReference type="OrthoDB" id="9777465at2"/>
<dbReference type="UniPathway" id="UPA00048">
    <property type="reaction ID" value="UER00071"/>
</dbReference>
<dbReference type="GO" id="GO:0009316">
    <property type="term" value="C:3-isopropylmalate dehydratase complex"/>
    <property type="evidence" value="ECO:0007669"/>
    <property type="project" value="InterPro"/>
</dbReference>
<dbReference type="GO" id="GO:0003861">
    <property type="term" value="F:3-isopropylmalate dehydratase activity"/>
    <property type="evidence" value="ECO:0007669"/>
    <property type="project" value="UniProtKB-UniRule"/>
</dbReference>
<dbReference type="GO" id="GO:0009098">
    <property type="term" value="P:L-leucine biosynthetic process"/>
    <property type="evidence" value="ECO:0007669"/>
    <property type="project" value="UniProtKB-UniRule"/>
</dbReference>
<dbReference type="CDD" id="cd01577">
    <property type="entry name" value="IPMI_Swivel"/>
    <property type="match status" value="1"/>
</dbReference>
<dbReference type="FunFam" id="3.20.19.10:FF:000003">
    <property type="entry name" value="3-isopropylmalate dehydratase small subunit"/>
    <property type="match status" value="1"/>
</dbReference>
<dbReference type="Gene3D" id="3.20.19.10">
    <property type="entry name" value="Aconitase, domain 4"/>
    <property type="match status" value="1"/>
</dbReference>
<dbReference type="HAMAP" id="MF_01031">
    <property type="entry name" value="LeuD_type1"/>
    <property type="match status" value="1"/>
</dbReference>
<dbReference type="InterPro" id="IPR004431">
    <property type="entry name" value="3-IsopropMal_deHydase_ssu"/>
</dbReference>
<dbReference type="InterPro" id="IPR015928">
    <property type="entry name" value="Aconitase/3IPM_dehydase_swvl"/>
</dbReference>
<dbReference type="InterPro" id="IPR000573">
    <property type="entry name" value="AconitaseA/IPMdHydase_ssu_swvl"/>
</dbReference>
<dbReference type="InterPro" id="IPR033940">
    <property type="entry name" value="IPMI_Swivel"/>
</dbReference>
<dbReference type="InterPro" id="IPR050075">
    <property type="entry name" value="LeuD"/>
</dbReference>
<dbReference type="NCBIfam" id="TIGR00171">
    <property type="entry name" value="leuD"/>
    <property type="match status" value="1"/>
</dbReference>
<dbReference type="NCBIfam" id="NF002458">
    <property type="entry name" value="PRK01641.1"/>
    <property type="match status" value="1"/>
</dbReference>
<dbReference type="PANTHER" id="PTHR43345:SF5">
    <property type="entry name" value="3-ISOPROPYLMALATE DEHYDRATASE SMALL SUBUNIT"/>
    <property type="match status" value="1"/>
</dbReference>
<dbReference type="PANTHER" id="PTHR43345">
    <property type="entry name" value="3-ISOPROPYLMALATE DEHYDRATASE SMALL SUBUNIT 2-RELATED-RELATED"/>
    <property type="match status" value="1"/>
</dbReference>
<dbReference type="Pfam" id="PF00694">
    <property type="entry name" value="Aconitase_C"/>
    <property type="match status" value="1"/>
</dbReference>
<dbReference type="SUPFAM" id="SSF52016">
    <property type="entry name" value="LeuD/IlvD-like"/>
    <property type="match status" value="1"/>
</dbReference>
<accession>B1XV53</accession>
<organism>
    <name type="scientific">Polynucleobacter necessarius subsp. necessarius (strain STIR1)</name>
    <dbReference type="NCBI Taxonomy" id="452638"/>
    <lineage>
        <taxon>Bacteria</taxon>
        <taxon>Pseudomonadati</taxon>
        <taxon>Pseudomonadota</taxon>
        <taxon>Betaproteobacteria</taxon>
        <taxon>Burkholderiales</taxon>
        <taxon>Burkholderiaceae</taxon>
        <taxon>Polynucleobacter</taxon>
    </lineage>
</organism>
<name>LEUD_POLNS</name>
<evidence type="ECO:0000255" key="1">
    <source>
        <dbReference type="HAMAP-Rule" id="MF_01031"/>
    </source>
</evidence>
<feature type="chain" id="PRO_1000135823" description="3-isopropylmalate dehydratase small subunit">
    <location>
        <begin position="1"/>
        <end position="215"/>
    </location>
</feature>